<accession>Q9Z7Z3</accession>
<accession>Q9JQI4</accession>
<name>SYE_CHLPN</name>
<sequence>MNWENVRVRVAPSPTGDPHVGTAYMALFNEIFAKRFKGKMILRIEDTDRTRSRQDYEENIFSALRWCGIQWDEGPDVGGPYGPYRQSERTKIYQGYVETLLKTDCAYKCFATPQELAEMRAVASTLGYRGGYDRRYRYLSPEEVASREAAGQPYTIRLKVPLSGECVFEDYSKGRVVFPWADVDDQVLVKSDGFPTYHFANVIDDHLMGITHVLRGEEWLSSTPKHLLLYEAFGWEPPVFLHMPLLLNPDGTKLSKRKNPTSIFYYRDSGYVKEAFVNFLTLMGYSMEGDEEVYSLERIIETFNPRRIGKSGAVFDIQKLDWMNKHYLNHEGSPECLLKELQGWLLNDEFFLKILPLCQSRITTLAEFINLTSFFFSGLLEYRVEELLPQALSPEKAAILLYSYVKYLEKTDQWTKETCYLGSKWLAQAFNVHHKKAIIPLLYVAITGKKQGLPLFDSIEILGKPRARARLVYAEKLLGGVPKKLAATVDKFMQREDFEEATFDL</sequence>
<feature type="chain" id="PRO_0000119539" description="Glutamate--tRNA ligase">
    <location>
        <begin position="1"/>
        <end position="505"/>
    </location>
</feature>
<feature type="short sequence motif" description="'HIGH' region" evidence="1">
    <location>
        <begin position="12"/>
        <end position="22"/>
    </location>
</feature>
<feature type="short sequence motif" description="'KMSKS' region" evidence="1">
    <location>
        <begin position="253"/>
        <end position="257"/>
    </location>
</feature>
<feature type="binding site" evidence="1">
    <location>
        <position position="256"/>
    </location>
    <ligand>
        <name>ATP</name>
        <dbReference type="ChEBI" id="CHEBI:30616"/>
    </ligand>
</feature>
<dbReference type="EC" id="6.1.1.17" evidence="1"/>
<dbReference type="EMBL" id="AE001363">
    <property type="protein sequence ID" value="AAD18700.1"/>
    <property type="molecule type" value="Genomic_DNA"/>
</dbReference>
<dbReference type="EMBL" id="AE002161">
    <property type="protein sequence ID" value="AAF38063.1"/>
    <property type="molecule type" value="Genomic_DNA"/>
</dbReference>
<dbReference type="EMBL" id="BA000008">
    <property type="protein sequence ID" value="BAA98766.1"/>
    <property type="molecule type" value="Genomic_DNA"/>
</dbReference>
<dbReference type="EMBL" id="AE009440">
    <property type="protein sequence ID" value="AAP98511.1"/>
    <property type="molecule type" value="Genomic_DNA"/>
</dbReference>
<dbReference type="PIR" id="C72064">
    <property type="entry name" value="C72064"/>
</dbReference>
<dbReference type="PIR" id="D86560">
    <property type="entry name" value="D86560"/>
</dbReference>
<dbReference type="RefSeq" id="NP_224756.1">
    <property type="nucleotide sequence ID" value="NC_000922.1"/>
</dbReference>
<dbReference type="RefSeq" id="WP_010883198.1">
    <property type="nucleotide sequence ID" value="NZ_LN847257.1"/>
</dbReference>
<dbReference type="SMR" id="Q9Z7Z3"/>
<dbReference type="STRING" id="406984.CPK_ORF01074"/>
<dbReference type="GeneID" id="45050604"/>
<dbReference type="KEGG" id="cpa:CP_0190"/>
<dbReference type="KEGG" id="cpj:gltX"/>
<dbReference type="KEGG" id="cpn:CPn_0560"/>
<dbReference type="KEGG" id="cpt:CpB0582"/>
<dbReference type="PATRIC" id="fig|115713.3.peg.622"/>
<dbReference type="eggNOG" id="COG0008">
    <property type="taxonomic scope" value="Bacteria"/>
</dbReference>
<dbReference type="HOGENOM" id="CLU_015768_6_3_0"/>
<dbReference type="OrthoDB" id="9807503at2"/>
<dbReference type="Proteomes" id="UP000000583">
    <property type="component" value="Chromosome"/>
</dbReference>
<dbReference type="Proteomes" id="UP000000801">
    <property type="component" value="Chromosome"/>
</dbReference>
<dbReference type="GO" id="GO:0005829">
    <property type="term" value="C:cytosol"/>
    <property type="evidence" value="ECO:0007669"/>
    <property type="project" value="TreeGrafter"/>
</dbReference>
<dbReference type="GO" id="GO:0005524">
    <property type="term" value="F:ATP binding"/>
    <property type="evidence" value="ECO:0007669"/>
    <property type="project" value="UniProtKB-UniRule"/>
</dbReference>
<dbReference type="GO" id="GO:0004818">
    <property type="term" value="F:glutamate-tRNA ligase activity"/>
    <property type="evidence" value="ECO:0007669"/>
    <property type="project" value="UniProtKB-UniRule"/>
</dbReference>
<dbReference type="GO" id="GO:0000049">
    <property type="term" value="F:tRNA binding"/>
    <property type="evidence" value="ECO:0007669"/>
    <property type="project" value="InterPro"/>
</dbReference>
<dbReference type="GO" id="GO:0008270">
    <property type="term" value="F:zinc ion binding"/>
    <property type="evidence" value="ECO:0007669"/>
    <property type="project" value="InterPro"/>
</dbReference>
<dbReference type="GO" id="GO:0006424">
    <property type="term" value="P:glutamyl-tRNA aminoacylation"/>
    <property type="evidence" value="ECO:0007669"/>
    <property type="project" value="UniProtKB-UniRule"/>
</dbReference>
<dbReference type="CDD" id="cd00808">
    <property type="entry name" value="GluRS_core"/>
    <property type="match status" value="1"/>
</dbReference>
<dbReference type="FunFam" id="3.40.50.620:FF:000045">
    <property type="entry name" value="Glutamate--tRNA ligase, mitochondrial"/>
    <property type="match status" value="1"/>
</dbReference>
<dbReference type="Gene3D" id="1.10.10.350">
    <property type="match status" value="1"/>
</dbReference>
<dbReference type="Gene3D" id="3.40.50.620">
    <property type="entry name" value="HUPs"/>
    <property type="match status" value="1"/>
</dbReference>
<dbReference type="HAMAP" id="MF_00022">
    <property type="entry name" value="Glu_tRNA_synth_type1"/>
    <property type="match status" value="1"/>
</dbReference>
<dbReference type="InterPro" id="IPR045462">
    <property type="entry name" value="aa-tRNA-synth_I_cd-bd"/>
</dbReference>
<dbReference type="InterPro" id="IPR020751">
    <property type="entry name" value="aa-tRNA-synth_I_codon-bd_sub2"/>
</dbReference>
<dbReference type="InterPro" id="IPR001412">
    <property type="entry name" value="aa-tRNA-synth_I_CS"/>
</dbReference>
<dbReference type="InterPro" id="IPR008925">
    <property type="entry name" value="aa_tRNA-synth_I_cd-bd_sf"/>
</dbReference>
<dbReference type="InterPro" id="IPR004527">
    <property type="entry name" value="Glu-tRNA-ligase_bac/mito"/>
</dbReference>
<dbReference type="InterPro" id="IPR000924">
    <property type="entry name" value="Glu/Gln-tRNA-synth"/>
</dbReference>
<dbReference type="InterPro" id="IPR020058">
    <property type="entry name" value="Glu/Gln-tRNA-synth_Ib_cat-dom"/>
</dbReference>
<dbReference type="InterPro" id="IPR049940">
    <property type="entry name" value="GluQ/Sye"/>
</dbReference>
<dbReference type="InterPro" id="IPR033910">
    <property type="entry name" value="GluRS_core"/>
</dbReference>
<dbReference type="InterPro" id="IPR014729">
    <property type="entry name" value="Rossmann-like_a/b/a_fold"/>
</dbReference>
<dbReference type="NCBIfam" id="TIGR00464">
    <property type="entry name" value="gltX_bact"/>
    <property type="match status" value="1"/>
</dbReference>
<dbReference type="PANTHER" id="PTHR43311">
    <property type="entry name" value="GLUTAMATE--TRNA LIGASE"/>
    <property type="match status" value="1"/>
</dbReference>
<dbReference type="PANTHER" id="PTHR43311:SF2">
    <property type="entry name" value="GLUTAMATE--TRNA LIGASE, MITOCHONDRIAL-RELATED"/>
    <property type="match status" value="1"/>
</dbReference>
<dbReference type="Pfam" id="PF19269">
    <property type="entry name" value="Anticodon_2"/>
    <property type="match status" value="1"/>
</dbReference>
<dbReference type="Pfam" id="PF00749">
    <property type="entry name" value="tRNA-synt_1c"/>
    <property type="match status" value="1"/>
</dbReference>
<dbReference type="PRINTS" id="PR00987">
    <property type="entry name" value="TRNASYNTHGLU"/>
</dbReference>
<dbReference type="SUPFAM" id="SSF48163">
    <property type="entry name" value="An anticodon-binding domain of class I aminoacyl-tRNA synthetases"/>
    <property type="match status" value="1"/>
</dbReference>
<dbReference type="SUPFAM" id="SSF52374">
    <property type="entry name" value="Nucleotidylyl transferase"/>
    <property type="match status" value="1"/>
</dbReference>
<dbReference type="PROSITE" id="PS00178">
    <property type="entry name" value="AA_TRNA_LIGASE_I"/>
    <property type="match status" value="1"/>
</dbReference>
<reference key="1">
    <citation type="journal article" date="1999" name="Nat. Genet.">
        <title>Comparative genomes of Chlamydia pneumoniae and C. trachomatis.</title>
        <authorList>
            <person name="Kalman S."/>
            <person name="Mitchell W.P."/>
            <person name="Marathe R."/>
            <person name="Lammel C.J."/>
            <person name="Fan J."/>
            <person name="Hyman R.W."/>
            <person name="Olinger L."/>
            <person name="Grimwood J."/>
            <person name="Davis R.W."/>
            <person name="Stephens R.S."/>
        </authorList>
    </citation>
    <scope>NUCLEOTIDE SEQUENCE [LARGE SCALE GENOMIC DNA]</scope>
    <source>
        <strain>CWL029</strain>
    </source>
</reference>
<reference key="2">
    <citation type="journal article" date="2000" name="Nucleic Acids Res.">
        <title>Genome sequences of Chlamydia trachomatis MoPn and Chlamydia pneumoniae AR39.</title>
        <authorList>
            <person name="Read T.D."/>
            <person name="Brunham R.C."/>
            <person name="Shen C."/>
            <person name="Gill S.R."/>
            <person name="Heidelberg J.F."/>
            <person name="White O."/>
            <person name="Hickey E.K."/>
            <person name="Peterson J.D."/>
            <person name="Utterback T.R."/>
            <person name="Berry K.J."/>
            <person name="Bass S."/>
            <person name="Linher K.D."/>
            <person name="Weidman J.F."/>
            <person name="Khouri H.M."/>
            <person name="Craven B."/>
            <person name="Bowman C."/>
            <person name="Dodson R.J."/>
            <person name="Gwinn M.L."/>
            <person name="Nelson W.C."/>
            <person name="DeBoy R.T."/>
            <person name="Kolonay J.F."/>
            <person name="McClarty G."/>
            <person name="Salzberg S.L."/>
            <person name="Eisen J.A."/>
            <person name="Fraser C.M."/>
        </authorList>
    </citation>
    <scope>NUCLEOTIDE SEQUENCE [LARGE SCALE GENOMIC DNA]</scope>
    <source>
        <strain>AR39</strain>
    </source>
</reference>
<reference key="3">
    <citation type="journal article" date="2000" name="Nucleic Acids Res.">
        <title>Comparison of whole genome sequences of Chlamydia pneumoniae J138 from Japan and CWL029 from USA.</title>
        <authorList>
            <person name="Shirai M."/>
            <person name="Hirakawa H."/>
            <person name="Kimoto M."/>
            <person name="Tabuchi M."/>
            <person name="Kishi F."/>
            <person name="Ouchi K."/>
            <person name="Shiba T."/>
            <person name="Ishii K."/>
            <person name="Hattori M."/>
            <person name="Kuhara S."/>
            <person name="Nakazawa T."/>
        </authorList>
    </citation>
    <scope>NUCLEOTIDE SEQUENCE [LARGE SCALE GENOMIC DNA]</scope>
    <source>
        <strain>J138</strain>
    </source>
</reference>
<reference key="4">
    <citation type="submission" date="2002-05" db="EMBL/GenBank/DDBJ databases">
        <title>The genome sequence of Chlamydia pneumoniae TW183 and comparison with other Chlamydia strains based on whole genome sequence analysis.</title>
        <authorList>
            <person name="Geng M.M."/>
            <person name="Schuhmacher A."/>
            <person name="Muehldorfer I."/>
            <person name="Bensch K.W."/>
            <person name="Schaefer K.P."/>
            <person name="Schneider S."/>
            <person name="Pohl T."/>
            <person name="Essig A."/>
            <person name="Marre R."/>
            <person name="Melchers K."/>
        </authorList>
    </citation>
    <scope>NUCLEOTIDE SEQUENCE [LARGE SCALE GENOMIC DNA]</scope>
    <source>
        <strain>TW-183</strain>
    </source>
</reference>
<keyword id="KW-0030">Aminoacyl-tRNA synthetase</keyword>
<keyword id="KW-0067">ATP-binding</keyword>
<keyword id="KW-0963">Cytoplasm</keyword>
<keyword id="KW-0436">Ligase</keyword>
<keyword id="KW-0547">Nucleotide-binding</keyword>
<keyword id="KW-0648">Protein biosynthesis</keyword>
<proteinExistence type="inferred from homology"/>
<comment type="function">
    <text evidence="1">Catalyzes the attachment of glutamate to tRNA(Glu) in a two-step reaction: glutamate is first activated by ATP to form Glu-AMP and then transferred to the acceptor end of tRNA(Glu).</text>
</comment>
<comment type="catalytic activity">
    <reaction evidence="1">
        <text>tRNA(Glu) + L-glutamate + ATP = L-glutamyl-tRNA(Glu) + AMP + diphosphate</text>
        <dbReference type="Rhea" id="RHEA:23540"/>
        <dbReference type="Rhea" id="RHEA-COMP:9663"/>
        <dbReference type="Rhea" id="RHEA-COMP:9680"/>
        <dbReference type="ChEBI" id="CHEBI:29985"/>
        <dbReference type="ChEBI" id="CHEBI:30616"/>
        <dbReference type="ChEBI" id="CHEBI:33019"/>
        <dbReference type="ChEBI" id="CHEBI:78442"/>
        <dbReference type="ChEBI" id="CHEBI:78520"/>
        <dbReference type="ChEBI" id="CHEBI:456215"/>
        <dbReference type="EC" id="6.1.1.17"/>
    </reaction>
</comment>
<comment type="subunit">
    <text evidence="1">Monomer.</text>
</comment>
<comment type="subcellular location">
    <subcellularLocation>
        <location evidence="1">Cytoplasm</location>
    </subcellularLocation>
</comment>
<comment type="similarity">
    <text evidence="1">Belongs to the class-I aminoacyl-tRNA synthetase family. Glutamate--tRNA ligase type 1 subfamily.</text>
</comment>
<organism>
    <name type="scientific">Chlamydia pneumoniae</name>
    <name type="common">Chlamydophila pneumoniae</name>
    <dbReference type="NCBI Taxonomy" id="83558"/>
    <lineage>
        <taxon>Bacteria</taxon>
        <taxon>Pseudomonadati</taxon>
        <taxon>Chlamydiota</taxon>
        <taxon>Chlamydiia</taxon>
        <taxon>Chlamydiales</taxon>
        <taxon>Chlamydiaceae</taxon>
        <taxon>Chlamydia/Chlamydophila group</taxon>
        <taxon>Chlamydia</taxon>
    </lineage>
</organism>
<gene>
    <name evidence="1" type="primary">gltX</name>
    <name type="ordered locus">CPn_0560</name>
    <name type="ordered locus">CP_0190</name>
    <name type="ordered locus">CpB0582</name>
</gene>
<evidence type="ECO:0000255" key="1">
    <source>
        <dbReference type="HAMAP-Rule" id="MF_00022"/>
    </source>
</evidence>
<protein>
    <recommendedName>
        <fullName evidence="1">Glutamate--tRNA ligase</fullName>
        <ecNumber evidence="1">6.1.1.17</ecNumber>
    </recommendedName>
    <alternativeName>
        <fullName evidence="1">Glutamyl-tRNA synthetase</fullName>
        <shortName evidence="1">GluRS</shortName>
    </alternativeName>
</protein>